<reference key="1">
    <citation type="journal article" date="2007" name="DNA Res.">
        <title>Complete genomic structure of the bloom-forming toxic cyanobacterium Microcystis aeruginosa NIES-843.</title>
        <authorList>
            <person name="Kaneko T."/>
            <person name="Nakajima N."/>
            <person name="Okamoto S."/>
            <person name="Suzuki I."/>
            <person name="Tanabe Y."/>
            <person name="Tamaoki M."/>
            <person name="Nakamura Y."/>
            <person name="Kasai F."/>
            <person name="Watanabe A."/>
            <person name="Kawashima K."/>
            <person name="Kishida Y."/>
            <person name="Ono A."/>
            <person name="Shimizu Y."/>
            <person name="Takahashi C."/>
            <person name="Minami C."/>
            <person name="Fujishiro T."/>
            <person name="Kohara M."/>
            <person name="Katoh M."/>
            <person name="Nakazaki N."/>
            <person name="Nakayama S."/>
            <person name="Yamada M."/>
            <person name="Tabata S."/>
            <person name="Watanabe M.M."/>
        </authorList>
    </citation>
    <scope>NUCLEOTIDE SEQUENCE [LARGE SCALE GENOMIC DNA]</scope>
    <source>
        <strain>NIES-843 / IAM M-247</strain>
    </source>
</reference>
<protein>
    <recommendedName>
        <fullName evidence="1">Diaminopimelate epimerase</fullName>
        <shortName evidence="1">DAP epimerase</shortName>
        <ecNumber evidence="1">5.1.1.7</ecNumber>
    </recommendedName>
    <alternativeName>
        <fullName evidence="1">PLP-independent amino acid racemase</fullName>
    </alternativeName>
</protein>
<feature type="chain" id="PRO_1000077699" description="Diaminopimelate epimerase">
    <location>
        <begin position="1"/>
        <end position="281"/>
    </location>
</feature>
<feature type="active site" description="Proton donor" evidence="1">
    <location>
        <position position="75"/>
    </location>
</feature>
<feature type="active site" description="Proton acceptor" evidence="1">
    <location>
        <position position="224"/>
    </location>
</feature>
<feature type="binding site" evidence="1">
    <location>
        <position position="13"/>
    </location>
    <ligand>
        <name>substrate</name>
    </ligand>
</feature>
<feature type="binding site" evidence="1">
    <location>
        <position position="66"/>
    </location>
    <ligand>
        <name>substrate</name>
    </ligand>
</feature>
<feature type="binding site" evidence="1">
    <location>
        <begin position="76"/>
        <end position="77"/>
    </location>
    <ligand>
        <name>substrate</name>
    </ligand>
</feature>
<feature type="binding site" evidence="1">
    <location>
        <position position="164"/>
    </location>
    <ligand>
        <name>substrate</name>
    </ligand>
</feature>
<feature type="binding site" evidence="1">
    <location>
        <position position="197"/>
    </location>
    <ligand>
        <name>substrate</name>
    </ligand>
</feature>
<feature type="binding site" evidence="1">
    <location>
        <begin position="215"/>
        <end position="216"/>
    </location>
    <ligand>
        <name>substrate</name>
    </ligand>
</feature>
<feature type="binding site" evidence="1">
    <location>
        <begin position="225"/>
        <end position="226"/>
    </location>
    <ligand>
        <name>substrate</name>
    </ligand>
</feature>
<feature type="site" description="Could be important to modulate the pK values of the two catalytic cysteine residues" evidence="1">
    <location>
        <position position="166"/>
    </location>
</feature>
<feature type="site" description="Could be important to modulate the pK values of the two catalytic cysteine residues" evidence="1">
    <location>
        <position position="215"/>
    </location>
</feature>
<gene>
    <name evidence="1" type="primary">dapF</name>
    <name type="ordered locus">MAE_59440</name>
</gene>
<evidence type="ECO:0000255" key="1">
    <source>
        <dbReference type="HAMAP-Rule" id="MF_00197"/>
    </source>
</evidence>
<sequence>MKIPFTKYQGLGNDFILIDNRHSPEPLITAEMAVAMCDRHFGIGADGVIFALPGQAETDYTMRIFNSDGSEPEMCGNGIRCLAQFIARLEANNAIGRTYRIHTLAGTIIPRLEANEQVTVDMGPPQLLGSEIPTTLVKGSEKVLAVPLEVEGKDWLVTCVSMGNPHCVTFVGDLASIPLETIGPKFEHHPVFPQRTNVEFVEVIAPDYMKMRVWERGAGITLACGTGACAVVVAALLTGKCDRRCTVELPGGCLQIHWSQTDNRVYMTGPAKAVFEGIYPI</sequence>
<proteinExistence type="inferred from homology"/>
<organism>
    <name type="scientific">Microcystis aeruginosa (strain NIES-843 / IAM M-2473)</name>
    <dbReference type="NCBI Taxonomy" id="449447"/>
    <lineage>
        <taxon>Bacteria</taxon>
        <taxon>Bacillati</taxon>
        <taxon>Cyanobacteriota</taxon>
        <taxon>Cyanophyceae</taxon>
        <taxon>Oscillatoriophycideae</taxon>
        <taxon>Chroococcales</taxon>
        <taxon>Microcystaceae</taxon>
        <taxon>Microcystis</taxon>
    </lineage>
</organism>
<keyword id="KW-0028">Amino-acid biosynthesis</keyword>
<keyword id="KW-0963">Cytoplasm</keyword>
<keyword id="KW-0413">Isomerase</keyword>
<keyword id="KW-0457">Lysine biosynthesis</keyword>
<dbReference type="EC" id="5.1.1.7" evidence="1"/>
<dbReference type="EMBL" id="AP009552">
    <property type="protein sequence ID" value="BAG05766.1"/>
    <property type="molecule type" value="Genomic_DNA"/>
</dbReference>
<dbReference type="RefSeq" id="WP_012268125.1">
    <property type="nucleotide sequence ID" value="NC_010296.1"/>
</dbReference>
<dbReference type="SMR" id="B0JJ58"/>
<dbReference type="STRING" id="449447.MAE_59440"/>
<dbReference type="PaxDb" id="449447-MAE_59440"/>
<dbReference type="EnsemblBacteria" id="BAG05766">
    <property type="protein sequence ID" value="BAG05766"/>
    <property type="gene ID" value="MAE_59440"/>
</dbReference>
<dbReference type="KEGG" id="mar:MAE_59440"/>
<dbReference type="PATRIC" id="fig|449447.4.peg.5446"/>
<dbReference type="eggNOG" id="COG0253">
    <property type="taxonomic scope" value="Bacteria"/>
</dbReference>
<dbReference type="HOGENOM" id="CLU_053306_2_1_3"/>
<dbReference type="BioCyc" id="MAER449447:MAE_RS25945-MONOMER"/>
<dbReference type="UniPathway" id="UPA00034">
    <property type="reaction ID" value="UER00025"/>
</dbReference>
<dbReference type="Proteomes" id="UP000001510">
    <property type="component" value="Chromosome"/>
</dbReference>
<dbReference type="GO" id="GO:0005829">
    <property type="term" value="C:cytosol"/>
    <property type="evidence" value="ECO:0007669"/>
    <property type="project" value="TreeGrafter"/>
</dbReference>
<dbReference type="GO" id="GO:0008837">
    <property type="term" value="F:diaminopimelate epimerase activity"/>
    <property type="evidence" value="ECO:0007669"/>
    <property type="project" value="UniProtKB-UniRule"/>
</dbReference>
<dbReference type="GO" id="GO:0009089">
    <property type="term" value="P:lysine biosynthetic process via diaminopimelate"/>
    <property type="evidence" value="ECO:0007669"/>
    <property type="project" value="UniProtKB-UniRule"/>
</dbReference>
<dbReference type="FunFam" id="3.10.310.10:FF:000009">
    <property type="entry name" value="Diaminopimelate epimerase chloroplastic"/>
    <property type="match status" value="1"/>
</dbReference>
<dbReference type="Gene3D" id="3.10.310.10">
    <property type="entry name" value="Diaminopimelate Epimerase, Chain A, domain 1"/>
    <property type="match status" value="2"/>
</dbReference>
<dbReference type="HAMAP" id="MF_00197">
    <property type="entry name" value="DAP_epimerase"/>
    <property type="match status" value="1"/>
</dbReference>
<dbReference type="InterPro" id="IPR018510">
    <property type="entry name" value="DAP_epimerase_AS"/>
</dbReference>
<dbReference type="InterPro" id="IPR001653">
    <property type="entry name" value="DAP_epimerase_DapF"/>
</dbReference>
<dbReference type="NCBIfam" id="TIGR00652">
    <property type="entry name" value="DapF"/>
    <property type="match status" value="1"/>
</dbReference>
<dbReference type="PANTHER" id="PTHR31689:SF0">
    <property type="entry name" value="DIAMINOPIMELATE EPIMERASE"/>
    <property type="match status" value="1"/>
</dbReference>
<dbReference type="PANTHER" id="PTHR31689">
    <property type="entry name" value="DIAMINOPIMELATE EPIMERASE, CHLOROPLASTIC"/>
    <property type="match status" value="1"/>
</dbReference>
<dbReference type="Pfam" id="PF01678">
    <property type="entry name" value="DAP_epimerase"/>
    <property type="match status" value="2"/>
</dbReference>
<dbReference type="SUPFAM" id="SSF54506">
    <property type="entry name" value="Diaminopimelate epimerase-like"/>
    <property type="match status" value="2"/>
</dbReference>
<dbReference type="PROSITE" id="PS01326">
    <property type="entry name" value="DAP_EPIMERASE"/>
    <property type="match status" value="1"/>
</dbReference>
<name>DAPF_MICAN</name>
<comment type="function">
    <text evidence="1">Catalyzes the stereoinversion of LL-2,6-diaminopimelate (L,L-DAP) to meso-diaminopimelate (meso-DAP), a precursor of L-lysine and an essential component of the bacterial peptidoglycan.</text>
</comment>
<comment type="catalytic activity">
    <reaction evidence="1">
        <text>(2S,6S)-2,6-diaminopimelate = meso-2,6-diaminopimelate</text>
        <dbReference type="Rhea" id="RHEA:15393"/>
        <dbReference type="ChEBI" id="CHEBI:57609"/>
        <dbReference type="ChEBI" id="CHEBI:57791"/>
        <dbReference type="EC" id="5.1.1.7"/>
    </reaction>
</comment>
<comment type="pathway">
    <text evidence="1">Amino-acid biosynthesis; L-lysine biosynthesis via DAP pathway; DL-2,6-diaminopimelate from LL-2,6-diaminopimelate: step 1/1.</text>
</comment>
<comment type="subunit">
    <text evidence="1">Homodimer.</text>
</comment>
<comment type="subcellular location">
    <subcellularLocation>
        <location evidence="1">Cytoplasm</location>
    </subcellularLocation>
</comment>
<comment type="similarity">
    <text evidence="1">Belongs to the diaminopimelate epimerase family.</text>
</comment>
<accession>B0JJ58</accession>